<organism>
    <name type="scientific">Streptococcus pneumoniae (strain ATCC BAA-255 / R6)</name>
    <dbReference type="NCBI Taxonomy" id="171101"/>
    <lineage>
        <taxon>Bacteria</taxon>
        <taxon>Bacillati</taxon>
        <taxon>Bacillota</taxon>
        <taxon>Bacilli</taxon>
        <taxon>Lactobacillales</taxon>
        <taxon>Streptococcaceae</taxon>
        <taxon>Streptococcus</taxon>
    </lineage>
</organism>
<protein>
    <recommendedName>
        <fullName>Putative NrdI-like protein</fullName>
    </recommendedName>
</protein>
<keyword id="KW-1185">Reference proteome</keyword>
<dbReference type="EMBL" id="AE007317">
    <property type="protein sequence ID" value="AAK98960.1"/>
    <property type="status" value="ALT_INIT"/>
    <property type="molecule type" value="Genomic_DNA"/>
</dbReference>
<dbReference type="PIR" id="D97891">
    <property type="entry name" value="D97891"/>
</dbReference>
<dbReference type="RefSeq" id="NP_357750.2">
    <property type="nucleotide sequence ID" value="NC_003098.1"/>
</dbReference>
<dbReference type="RefSeq" id="WP_000849624.1">
    <property type="nucleotide sequence ID" value="NC_003098.1"/>
</dbReference>
<dbReference type="SMR" id="Q8DRF4"/>
<dbReference type="STRING" id="171101.spr0156"/>
<dbReference type="KEGG" id="spr:spr0156"/>
<dbReference type="PATRIC" id="fig|171101.6.peg.183"/>
<dbReference type="eggNOG" id="COG1780">
    <property type="taxonomic scope" value="Bacteria"/>
</dbReference>
<dbReference type="HOGENOM" id="CLU_114845_1_0_9"/>
<dbReference type="Proteomes" id="UP000000586">
    <property type="component" value="Chromosome"/>
</dbReference>
<dbReference type="GO" id="GO:0010181">
    <property type="term" value="F:FMN binding"/>
    <property type="evidence" value="ECO:0000318"/>
    <property type="project" value="GO_Central"/>
</dbReference>
<dbReference type="GO" id="GO:0036211">
    <property type="term" value="P:protein modification process"/>
    <property type="evidence" value="ECO:0007669"/>
    <property type="project" value="InterPro"/>
</dbReference>
<dbReference type="FunFam" id="3.40.50.360:FF:000046">
    <property type="entry name" value="NrdI protein, putative"/>
    <property type="match status" value="1"/>
</dbReference>
<dbReference type="Gene3D" id="3.40.50.360">
    <property type="match status" value="1"/>
</dbReference>
<dbReference type="InterPro" id="IPR029039">
    <property type="entry name" value="Flavoprotein-like_sf"/>
</dbReference>
<dbReference type="InterPro" id="IPR004465">
    <property type="entry name" value="RNR_NrdI"/>
</dbReference>
<dbReference type="NCBIfam" id="NF002714">
    <property type="entry name" value="PRK02551.1"/>
    <property type="match status" value="1"/>
</dbReference>
<dbReference type="PANTHER" id="PTHR37297">
    <property type="entry name" value="PROTEIN NRDI"/>
    <property type="match status" value="1"/>
</dbReference>
<dbReference type="PANTHER" id="PTHR37297:SF1">
    <property type="entry name" value="PROTEIN NRDI"/>
    <property type="match status" value="1"/>
</dbReference>
<dbReference type="Pfam" id="PF07972">
    <property type="entry name" value="Flavodoxin_NdrI"/>
    <property type="match status" value="1"/>
</dbReference>
<dbReference type="PIRSF" id="PIRSF005087">
    <property type="entry name" value="NrdI"/>
    <property type="match status" value="1"/>
</dbReference>
<dbReference type="SUPFAM" id="SSF52218">
    <property type="entry name" value="Flavoproteins"/>
    <property type="match status" value="1"/>
</dbReference>
<evidence type="ECO:0000305" key="1"/>
<reference key="1">
    <citation type="journal article" date="2001" name="J. Bacteriol.">
        <title>Genome of the bacterium Streptococcus pneumoniae strain R6.</title>
        <authorList>
            <person name="Hoskins J."/>
            <person name="Alborn W.E. Jr."/>
            <person name="Arnold J."/>
            <person name="Blaszczak L.C."/>
            <person name="Burgett S."/>
            <person name="DeHoff B.S."/>
            <person name="Estrem S.T."/>
            <person name="Fritz L."/>
            <person name="Fu D.-J."/>
            <person name="Fuller W."/>
            <person name="Geringer C."/>
            <person name="Gilmour R."/>
            <person name="Glass J.S."/>
            <person name="Khoja H."/>
            <person name="Kraft A.R."/>
            <person name="Lagace R.E."/>
            <person name="LeBlanc D.J."/>
            <person name="Lee L.N."/>
            <person name="Lefkowitz E.J."/>
            <person name="Lu J."/>
            <person name="Matsushima P."/>
            <person name="McAhren S.M."/>
            <person name="McHenney M."/>
            <person name="McLeaster K."/>
            <person name="Mundy C.W."/>
            <person name="Nicas T.I."/>
            <person name="Norris F.H."/>
            <person name="O'Gara M."/>
            <person name="Peery R.B."/>
            <person name="Robertson G.T."/>
            <person name="Rockey P."/>
            <person name="Sun P.-M."/>
            <person name="Winkler M.E."/>
            <person name="Yang Y."/>
            <person name="Young-Bellido M."/>
            <person name="Zhao G."/>
            <person name="Zook C.A."/>
            <person name="Baltz R.H."/>
            <person name="Jaskunas S.R."/>
            <person name="Rosteck P.R. Jr."/>
            <person name="Skatrud P.L."/>
            <person name="Glass J.I."/>
        </authorList>
    </citation>
    <scope>NUCLEOTIDE SEQUENCE [LARGE SCALE GENOMIC DNA]</scope>
    <source>
        <strain>ATCC BAA-255 / R6</strain>
    </source>
</reference>
<feature type="chain" id="PRO_0000164351" description="Putative NrdI-like protein">
    <location>
        <begin position="1"/>
        <end position="156"/>
    </location>
</feature>
<sequence length="156" mass="17668">MKTISLVYISLSGNTESFVTRLKDYLLSQYKRIEVQKIHIKDLVKEGKNFYEMDHPYVAFLPTYLEGGNGVDNGDVEILTTPVGDFIAYGNNASKCFGVVGSGNRNFNNQYCLTAKQYSQRFGFPVLADFEMRGMLEDIKHVAAIIADLYELEKEN</sequence>
<comment type="sequence caution" evidence="1">
    <conflict type="erroneous initiation">
        <sequence resource="EMBL-CDS" id="AAK98960"/>
    </conflict>
</comment>
<gene>
    <name type="ordered locus">spr0156</name>
</gene>
<accession>Q8DRF4</accession>
<name>NRDIL_STRR6</name>
<proteinExistence type="predicted"/>